<gene>
    <name type="primary">mptN</name>
    <name type="ordered locus">MJ0620</name>
</gene>
<accession>Q58037</accession>
<dbReference type="EC" id="6.3.2.33"/>
<dbReference type="EMBL" id="L77117">
    <property type="protein sequence ID" value="AAB98615.1"/>
    <property type="molecule type" value="Genomic_DNA"/>
</dbReference>
<dbReference type="PIR" id="D64377">
    <property type="entry name" value="D64377"/>
</dbReference>
<dbReference type="RefSeq" id="WP_010870125.1">
    <property type="nucleotide sequence ID" value="NC_000909.1"/>
</dbReference>
<dbReference type="SMR" id="Q58037"/>
<dbReference type="FunCoup" id="Q58037">
    <property type="interactions" value="110"/>
</dbReference>
<dbReference type="STRING" id="243232.MJ_0620"/>
<dbReference type="PaxDb" id="243232-MJ_0620"/>
<dbReference type="EnsemblBacteria" id="AAB98615">
    <property type="protein sequence ID" value="AAB98615"/>
    <property type="gene ID" value="MJ_0620"/>
</dbReference>
<dbReference type="GeneID" id="1451486"/>
<dbReference type="KEGG" id="mja:MJ_0620"/>
<dbReference type="eggNOG" id="arCOG01589">
    <property type="taxonomic scope" value="Archaea"/>
</dbReference>
<dbReference type="HOGENOM" id="CLU_054353_2_0_2"/>
<dbReference type="InParanoid" id="Q58037"/>
<dbReference type="OrthoDB" id="33241at2157"/>
<dbReference type="PhylomeDB" id="Q58037"/>
<dbReference type="BioCyc" id="MetaCyc:MONOMER-15293"/>
<dbReference type="BRENDA" id="6.3.2.33">
    <property type="organism ID" value="3260"/>
</dbReference>
<dbReference type="UniPathway" id="UPA00069"/>
<dbReference type="Proteomes" id="UP000000805">
    <property type="component" value="Chromosome"/>
</dbReference>
<dbReference type="GO" id="GO:0005737">
    <property type="term" value="C:cytoplasm"/>
    <property type="evidence" value="ECO:0000318"/>
    <property type="project" value="GO_Central"/>
</dbReference>
<dbReference type="GO" id="GO:0005524">
    <property type="term" value="F:ATP binding"/>
    <property type="evidence" value="ECO:0007669"/>
    <property type="project" value="UniProtKB-KW"/>
</dbReference>
<dbReference type="GO" id="GO:0005525">
    <property type="term" value="F:GTP binding"/>
    <property type="evidence" value="ECO:0007669"/>
    <property type="project" value="UniProtKB-KW"/>
</dbReference>
<dbReference type="GO" id="GO:0016879">
    <property type="term" value="F:ligase activity, forming carbon-nitrogen bonds"/>
    <property type="evidence" value="ECO:0000318"/>
    <property type="project" value="GO_Central"/>
</dbReference>
<dbReference type="GO" id="GO:0046872">
    <property type="term" value="F:metal ion binding"/>
    <property type="evidence" value="ECO:0007669"/>
    <property type="project" value="UniProtKB-KW"/>
</dbReference>
<dbReference type="GO" id="GO:0036211">
    <property type="term" value="P:protein modification process"/>
    <property type="evidence" value="ECO:0007669"/>
    <property type="project" value="InterPro"/>
</dbReference>
<dbReference type="FunFam" id="3.30.470.20:FF:000058">
    <property type="entry name" value="Alpha-aminoadipate--LysW ligase LysX protein"/>
    <property type="match status" value="1"/>
</dbReference>
<dbReference type="Gene3D" id="3.40.50.20">
    <property type="match status" value="1"/>
</dbReference>
<dbReference type="Gene3D" id="3.30.1490.20">
    <property type="entry name" value="ATP-grasp fold, A domain"/>
    <property type="match status" value="1"/>
</dbReference>
<dbReference type="Gene3D" id="3.30.470.20">
    <property type="entry name" value="ATP-grasp fold, B domain"/>
    <property type="match status" value="1"/>
</dbReference>
<dbReference type="InterPro" id="IPR011761">
    <property type="entry name" value="ATP-grasp"/>
</dbReference>
<dbReference type="InterPro" id="IPR013651">
    <property type="entry name" value="ATP-grasp_RimK-type"/>
</dbReference>
<dbReference type="InterPro" id="IPR013815">
    <property type="entry name" value="ATP_grasp_subdomain_1"/>
</dbReference>
<dbReference type="InterPro" id="IPR004666">
    <property type="entry name" value="Rp_bS6_RimK/Lys_biosynth_LsyX"/>
</dbReference>
<dbReference type="InterPro" id="IPR053432">
    <property type="entry name" value="THMPT_Glu_ligase"/>
</dbReference>
<dbReference type="NCBIfam" id="NF040720">
    <property type="entry name" value="MptN_Meth"/>
    <property type="match status" value="1"/>
</dbReference>
<dbReference type="NCBIfam" id="TIGR00768">
    <property type="entry name" value="rimK_fam"/>
    <property type="match status" value="1"/>
</dbReference>
<dbReference type="PANTHER" id="PTHR21621:SF0">
    <property type="entry name" value="BETA-CITRYLGLUTAMATE SYNTHASE B-RELATED"/>
    <property type="match status" value="1"/>
</dbReference>
<dbReference type="PANTHER" id="PTHR21621">
    <property type="entry name" value="RIBOSOMAL PROTEIN S6 MODIFICATION PROTEIN"/>
    <property type="match status" value="1"/>
</dbReference>
<dbReference type="Pfam" id="PF08443">
    <property type="entry name" value="RimK"/>
    <property type="match status" value="1"/>
</dbReference>
<dbReference type="SUPFAM" id="SSF56059">
    <property type="entry name" value="Glutathione synthetase ATP-binding domain-like"/>
    <property type="match status" value="1"/>
</dbReference>
<dbReference type="PROSITE" id="PS50975">
    <property type="entry name" value="ATP_GRASP"/>
    <property type="match status" value="1"/>
</dbReference>
<name>MPTN_METJA</name>
<comment type="function">
    <text evidence="3">Catalyzes the ATP or GTP-dependent addition of one L-glutamate molecule to tetrahydromethanopterin, producing tetrahydrosarcinapterin.</text>
</comment>
<comment type="catalytic activity">
    <reaction evidence="3">
        <text>5,6,7,8-tetrahydromethanopterin + L-glutamate + ATP = 5,6,7,8-tetrahydrosarcinapterin + ADP + phosphate + H(+)</text>
        <dbReference type="Rhea" id="RHEA:30567"/>
        <dbReference type="ChEBI" id="CHEBI:15378"/>
        <dbReference type="ChEBI" id="CHEBI:29985"/>
        <dbReference type="ChEBI" id="CHEBI:30616"/>
        <dbReference type="ChEBI" id="CHEBI:43474"/>
        <dbReference type="ChEBI" id="CHEBI:58103"/>
        <dbReference type="ChEBI" id="CHEBI:59924"/>
        <dbReference type="ChEBI" id="CHEBI:456216"/>
        <dbReference type="EC" id="6.3.2.33"/>
    </reaction>
</comment>
<comment type="cofactor">
    <cofactor evidence="1">
        <name>Mg(2+)</name>
        <dbReference type="ChEBI" id="CHEBI:18420"/>
    </cofactor>
    <cofactor evidence="1">
        <name>Mn(2+)</name>
        <dbReference type="ChEBI" id="CHEBI:29035"/>
    </cofactor>
    <text evidence="1">Binds 2 magnesium or manganese ions per subunit.</text>
</comment>
<comment type="pathway">
    <text>Cofactor biosynthesis; 5,6,7,8-tetrahydrosarcinapterin biosynthesis.</text>
</comment>
<comment type="subunit">
    <text evidence="3">Homodimer.</text>
</comment>
<comment type="similarity">
    <text evidence="4">Belongs to the RimK family. MptN subfamily.</text>
</comment>
<organism>
    <name type="scientific">Methanocaldococcus jannaschii (strain ATCC 43067 / DSM 2661 / JAL-1 / JCM 10045 / NBRC 100440)</name>
    <name type="common">Methanococcus jannaschii</name>
    <dbReference type="NCBI Taxonomy" id="243232"/>
    <lineage>
        <taxon>Archaea</taxon>
        <taxon>Methanobacteriati</taxon>
        <taxon>Methanobacteriota</taxon>
        <taxon>Methanomada group</taxon>
        <taxon>Methanococci</taxon>
        <taxon>Methanococcales</taxon>
        <taxon>Methanocaldococcaceae</taxon>
        <taxon>Methanocaldococcus</taxon>
    </lineage>
</organism>
<feature type="chain" id="PRO_0000205502" description="Tetrahydromethanopterin:alpha-L-glutamate ligase">
    <location>
        <begin position="1"/>
        <end position="291"/>
    </location>
</feature>
<feature type="domain" description="ATP-grasp" evidence="2">
    <location>
        <begin position="101"/>
        <end position="286"/>
    </location>
</feature>
<feature type="binding site" evidence="1">
    <location>
        <position position="136"/>
    </location>
    <ligand>
        <name>ATP</name>
        <dbReference type="ChEBI" id="CHEBI:30616"/>
    </ligand>
</feature>
<feature type="binding site" evidence="2">
    <location>
        <begin position="175"/>
        <end position="187"/>
    </location>
    <ligand>
        <name>ATP</name>
        <dbReference type="ChEBI" id="CHEBI:30616"/>
    </ligand>
</feature>
<feature type="binding site" evidence="1">
    <location>
        <position position="203"/>
    </location>
    <ligand>
        <name>ATP</name>
        <dbReference type="ChEBI" id="CHEBI:30616"/>
    </ligand>
</feature>
<feature type="binding site" evidence="2">
    <location>
        <position position="247"/>
    </location>
    <ligand>
        <name>Mg(2+)</name>
        <dbReference type="ChEBI" id="CHEBI:18420"/>
        <label>1</label>
    </ligand>
</feature>
<feature type="binding site" evidence="2">
    <location>
        <position position="247"/>
    </location>
    <ligand>
        <name>Mn(2+)</name>
        <dbReference type="ChEBI" id="CHEBI:29035"/>
        <label>1</label>
    </ligand>
</feature>
<feature type="binding site" evidence="2">
    <location>
        <position position="259"/>
    </location>
    <ligand>
        <name>Mg(2+)</name>
        <dbReference type="ChEBI" id="CHEBI:18420"/>
        <label>1</label>
    </ligand>
</feature>
<feature type="binding site" evidence="2">
    <location>
        <position position="259"/>
    </location>
    <ligand>
        <name>Mg(2+)</name>
        <dbReference type="ChEBI" id="CHEBI:18420"/>
        <label>2</label>
    </ligand>
</feature>
<feature type="binding site" evidence="2">
    <location>
        <position position="259"/>
    </location>
    <ligand>
        <name>Mn(2+)</name>
        <dbReference type="ChEBI" id="CHEBI:29035"/>
        <label>1</label>
    </ligand>
</feature>
<feature type="binding site" evidence="2">
    <location>
        <position position="259"/>
    </location>
    <ligand>
        <name>Mn(2+)</name>
        <dbReference type="ChEBI" id="CHEBI:29035"/>
        <label>2</label>
    </ligand>
</feature>
<feature type="binding site" evidence="2">
    <location>
        <position position="261"/>
    </location>
    <ligand>
        <name>Mg(2+)</name>
        <dbReference type="ChEBI" id="CHEBI:18420"/>
        <label>2</label>
    </ligand>
</feature>
<feature type="binding site" evidence="2">
    <location>
        <position position="261"/>
    </location>
    <ligand>
        <name>Mn(2+)</name>
        <dbReference type="ChEBI" id="CHEBI:29035"/>
        <label>2</label>
    </ligand>
</feature>
<evidence type="ECO:0000250" key="1"/>
<evidence type="ECO:0000255" key="2">
    <source>
        <dbReference type="PROSITE-ProRule" id="PRU00409"/>
    </source>
</evidence>
<evidence type="ECO:0000269" key="3">
    <source>
    </source>
</evidence>
<evidence type="ECO:0000305" key="4"/>
<keyword id="KW-0067">ATP-binding</keyword>
<keyword id="KW-0342">GTP-binding</keyword>
<keyword id="KW-0436">Ligase</keyword>
<keyword id="KW-0460">Magnesium</keyword>
<keyword id="KW-0464">Manganese</keyword>
<keyword id="KW-0479">Metal-binding</keyword>
<keyword id="KW-0547">Nucleotide-binding</keyword>
<keyword id="KW-1185">Reference proteome</keyword>
<protein>
    <recommendedName>
        <fullName>Tetrahydromethanopterin:alpha-L-glutamate ligase</fullName>
        <ecNumber>6.3.2.33</ecNumber>
    </recommendedName>
    <alternativeName>
        <fullName>H(4)MPT:alpha-L-glutamate ligase</fullName>
    </alternativeName>
</protein>
<proteinExistence type="evidence at protein level"/>
<reference key="1">
    <citation type="journal article" date="1996" name="Science">
        <title>Complete genome sequence of the methanogenic archaeon, Methanococcus jannaschii.</title>
        <authorList>
            <person name="Bult C.J."/>
            <person name="White O."/>
            <person name="Olsen G.J."/>
            <person name="Zhou L."/>
            <person name="Fleischmann R.D."/>
            <person name="Sutton G.G."/>
            <person name="Blake J.A."/>
            <person name="FitzGerald L.M."/>
            <person name="Clayton R.A."/>
            <person name="Gocayne J.D."/>
            <person name="Kerlavage A.R."/>
            <person name="Dougherty B.A."/>
            <person name="Tomb J.-F."/>
            <person name="Adams M.D."/>
            <person name="Reich C.I."/>
            <person name="Overbeek R."/>
            <person name="Kirkness E.F."/>
            <person name="Weinstock K.G."/>
            <person name="Merrick J.M."/>
            <person name="Glodek A."/>
            <person name="Scott J.L."/>
            <person name="Geoghagen N.S.M."/>
            <person name="Weidman J.F."/>
            <person name="Fuhrmann J.L."/>
            <person name="Nguyen D."/>
            <person name="Utterback T.R."/>
            <person name="Kelley J.M."/>
            <person name="Peterson J.D."/>
            <person name="Sadow P.W."/>
            <person name="Hanna M.C."/>
            <person name="Cotton M.D."/>
            <person name="Roberts K.M."/>
            <person name="Hurst M.A."/>
            <person name="Kaine B.P."/>
            <person name="Borodovsky M."/>
            <person name="Klenk H.-P."/>
            <person name="Fraser C.M."/>
            <person name="Smith H.O."/>
            <person name="Woese C.R."/>
            <person name="Venter J.C."/>
        </authorList>
    </citation>
    <scope>NUCLEOTIDE SEQUENCE [LARGE SCALE GENOMIC DNA]</scope>
    <source>
        <strain>ATCC 43067 / DSM 2661 / JAL-1 / JCM 10045 / NBRC 100440</strain>
    </source>
</reference>
<reference key="2">
    <citation type="journal article" date="2003" name="Proc. Natl. Acad. Sci. U.S.A.">
        <title>Glutathione synthetase homologs encode alpha-L-glutamate ligases for methanogenic coenzyme F420 and tetrahydrosarcinapterin biosyntheses.</title>
        <authorList>
            <person name="Li H."/>
            <person name="Xu H."/>
            <person name="Graham D.E."/>
            <person name="White R.H."/>
        </authorList>
    </citation>
    <scope>FUNCTION</scope>
    <scope>CATALYTIC ACTIVITY</scope>
    <scope>SUBUNIT</scope>
    <source>
        <strain>ATCC 43067 / DSM 2661 / JAL-1 / JCM 10045 / NBRC 100440</strain>
    </source>
</reference>
<sequence length="291" mass="33277">MKLGIITIERDAVVNDLIKSCEKYEVDYKVITPSNIVAGFNLDFKLKYYKSFLDELDCCFVRNLGWDSFFRFDVLKYLNHYIPVINPPDGIDRASNKFLTSVFLELNNLPQPKTVVTESINEAIVWIDKFEEAVLKPIFGCGGEGIVRVKKELPISTKLKILNEFKEKYNTFYIQEFIKPVRNEHRDIRAFVVDDEVVAAMYRIGGENWKNNVSQGGRVEKCEITEEIEKLALKAKNALGLFYAGVDLIESEDGLKVLEVNSTPSWIGLSKVSEVNIADKLLEKIIQYVKS</sequence>